<comment type="function">
    <text evidence="1">F(1)F(0) ATP synthase produces ATP from ADP in the presence of a proton or sodium gradient. F-type ATPases consist of two structural domains, F(1) containing the extramembraneous catalytic core and F(0) containing the membrane proton channel, linked together by a central stalk and a peripheral stalk. During catalysis, ATP synthesis in the catalytic domain of F(1) is coupled via a rotary mechanism of the central stalk subunits to proton translocation.</text>
</comment>
<comment type="function">
    <text evidence="1">Key component of the F(0) channel; it plays a direct role in translocation across the membrane. A homomeric c-ring of between 10-14 subunits forms the central stalk rotor element with the F(1) delta and epsilon subunits.</text>
</comment>
<comment type="subunit">
    <text evidence="1">F-type ATPases have 2 components, F(1) - the catalytic core - and F(0) - the membrane proton channel. F(1) has five subunits: alpha(3), beta(3), gamma(1), delta(1), epsilon(1). F(0) has four main subunits: a(1), b(1), b'(1) and c(10-14). The alpha and beta chains form an alternating ring which encloses part of the gamma chain. F(1) is attached to F(0) by a central stalk formed by the gamma and epsilon chains, while a peripheral stalk is formed by the delta, b and b' chains.</text>
</comment>
<comment type="subcellular location">
    <subcellularLocation>
        <location evidence="1">Plastid</location>
        <location evidence="1">Chloroplast thylakoid membrane</location>
        <topology evidence="1">Multi-pass membrane protein</topology>
    </subcellularLocation>
</comment>
<comment type="miscellaneous">
    <text>In plastids the F-type ATPase is also known as CF(1)CF(0).</text>
</comment>
<comment type="similarity">
    <text evidence="1">Belongs to the ATPase C chain family.</text>
</comment>
<organism>
    <name type="scientific">Diacronema lutheri</name>
    <name type="common">Unicellular marine alga</name>
    <name type="synonym">Monochrysis lutheri</name>
    <dbReference type="NCBI Taxonomy" id="2081491"/>
    <lineage>
        <taxon>Eukaryota</taxon>
        <taxon>Haptista</taxon>
        <taxon>Haptophyta</taxon>
        <taxon>Pavlovales</taxon>
        <taxon>Pavlovaceae</taxon>
        <taxon>Diacronema</taxon>
    </lineage>
</organism>
<name>ATPH_DIALT</name>
<geneLocation type="chloroplast"/>
<reference key="1">
    <citation type="journal article" date="1992" name="FEBS Lett.">
        <title>Characterisation of a chloroplast-encoded secY homologue and atpH from a chromophytic alga. Evidence for a novel chloroplast genome organisation.</title>
        <authorList>
            <person name="Scaramuzzi C.D."/>
            <person name="Stokes H.W."/>
            <person name="Hiller R.G."/>
        </authorList>
    </citation>
    <scope>NUCLEOTIDE SEQUENCE [GENOMIC DNA]</scope>
</reference>
<feature type="chain" id="PRO_0000112200" description="ATP synthase subunit c, chloroplastic">
    <location>
        <begin position="1"/>
        <end position="83"/>
    </location>
</feature>
<feature type="transmembrane region" description="Helical" evidence="1">
    <location>
        <begin position="3"/>
        <end position="23"/>
    </location>
</feature>
<feature type="transmembrane region" description="Helical" evidence="1">
    <location>
        <begin position="57"/>
        <end position="77"/>
    </location>
</feature>
<feature type="site" description="Reversibly protonated during proton transport" evidence="1">
    <location>
        <position position="61"/>
    </location>
</feature>
<proteinExistence type="inferred from homology"/>
<sequence>MNPIISAASVIAAGLSVGLAAIGPGIGQGSAAGQALEGIARQPEAEGKIRGTLLLSLAFMEALTIYGLVVALSLLFANPFTAS</sequence>
<accession>P28530</accession>
<protein>
    <recommendedName>
        <fullName evidence="1">ATP synthase subunit c, chloroplastic</fullName>
    </recommendedName>
    <alternativeName>
        <fullName evidence="1">ATP synthase F(0) sector subunit c</fullName>
    </alternativeName>
    <alternativeName>
        <fullName evidence="1">ATPase subunit III</fullName>
    </alternativeName>
    <alternativeName>
        <fullName evidence="1">F-type ATPase subunit c</fullName>
        <shortName evidence="1">F-ATPase subunit c</shortName>
    </alternativeName>
    <alternativeName>
        <fullName evidence="1">Lipid-binding protein</fullName>
    </alternativeName>
</protein>
<gene>
    <name evidence="1" type="primary">atpH</name>
</gene>
<dbReference type="EMBL" id="X64731">
    <property type="protein sequence ID" value="CAA45997.1"/>
    <property type="molecule type" value="Genomic_DNA"/>
</dbReference>
<dbReference type="PIR" id="S23424">
    <property type="entry name" value="S23424"/>
</dbReference>
<dbReference type="RefSeq" id="YP_007476307.1">
    <property type="nucleotide sequence ID" value="NC_020371.1"/>
</dbReference>
<dbReference type="SMR" id="P28530"/>
<dbReference type="GeneID" id="14659758"/>
<dbReference type="GO" id="GO:0009535">
    <property type="term" value="C:chloroplast thylakoid membrane"/>
    <property type="evidence" value="ECO:0007669"/>
    <property type="project" value="UniProtKB-SubCell"/>
</dbReference>
<dbReference type="GO" id="GO:0045259">
    <property type="term" value="C:proton-transporting ATP synthase complex"/>
    <property type="evidence" value="ECO:0007669"/>
    <property type="project" value="UniProtKB-KW"/>
</dbReference>
<dbReference type="GO" id="GO:0033177">
    <property type="term" value="C:proton-transporting two-sector ATPase complex, proton-transporting domain"/>
    <property type="evidence" value="ECO:0007669"/>
    <property type="project" value="InterPro"/>
</dbReference>
<dbReference type="GO" id="GO:0008289">
    <property type="term" value="F:lipid binding"/>
    <property type="evidence" value="ECO:0007669"/>
    <property type="project" value="UniProtKB-KW"/>
</dbReference>
<dbReference type="GO" id="GO:0046933">
    <property type="term" value="F:proton-transporting ATP synthase activity, rotational mechanism"/>
    <property type="evidence" value="ECO:0007669"/>
    <property type="project" value="UniProtKB-UniRule"/>
</dbReference>
<dbReference type="CDD" id="cd18183">
    <property type="entry name" value="ATP-synt_Fo_c_ATPH"/>
    <property type="match status" value="1"/>
</dbReference>
<dbReference type="FunFam" id="1.20.20.10:FF:000001">
    <property type="entry name" value="ATP synthase subunit c, chloroplastic"/>
    <property type="match status" value="1"/>
</dbReference>
<dbReference type="Gene3D" id="1.20.20.10">
    <property type="entry name" value="F1F0 ATP synthase subunit C"/>
    <property type="match status" value="1"/>
</dbReference>
<dbReference type="HAMAP" id="MF_01396">
    <property type="entry name" value="ATP_synth_c_bact"/>
    <property type="match status" value="1"/>
</dbReference>
<dbReference type="InterPro" id="IPR005953">
    <property type="entry name" value="ATP_synth_csu_bac/chlpt"/>
</dbReference>
<dbReference type="InterPro" id="IPR000454">
    <property type="entry name" value="ATP_synth_F0_csu"/>
</dbReference>
<dbReference type="InterPro" id="IPR020537">
    <property type="entry name" value="ATP_synth_F0_csu_DDCD_BS"/>
</dbReference>
<dbReference type="InterPro" id="IPR038662">
    <property type="entry name" value="ATP_synth_F0_csu_sf"/>
</dbReference>
<dbReference type="InterPro" id="IPR002379">
    <property type="entry name" value="ATPase_proteolipid_c-like_dom"/>
</dbReference>
<dbReference type="InterPro" id="IPR035921">
    <property type="entry name" value="F/V-ATP_Csub_sf"/>
</dbReference>
<dbReference type="NCBIfam" id="TIGR01260">
    <property type="entry name" value="ATP_synt_c"/>
    <property type="match status" value="1"/>
</dbReference>
<dbReference type="NCBIfam" id="NF005608">
    <property type="entry name" value="PRK07354.1"/>
    <property type="match status" value="1"/>
</dbReference>
<dbReference type="PANTHER" id="PTHR10031">
    <property type="entry name" value="ATP SYNTHASE LIPID-BINDING PROTEIN, MITOCHONDRIAL"/>
    <property type="match status" value="1"/>
</dbReference>
<dbReference type="PANTHER" id="PTHR10031:SF0">
    <property type="entry name" value="ATPASE PROTEIN 9"/>
    <property type="match status" value="1"/>
</dbReference>
<dbReference type="Pfam" id="PF00137">
    <property type="entry name" value="ATP-synt_C"/>
    <property type="match status" value="1"/>
</dbReference>
<dbReference type="PRINTS" id="PR00124">
    <property type="entry name" value="ATPASEC"/>
</dbReference>
<dbReference type="SUPFAM" id="SSF81333">
    <property type="entry name" value="F1F0 ATP synthase subunit C"/>
    <property type="match status" value="1"/>
</dbReference>
<dbReference type="PROSITE" id="PS00605">
    <property type="entry name" value="ATPASE_C"/>
    <property type="match status" value="1"/>
</dbReference>
<keyword id="KW-0066">ATP synthesis</keyword>
<keyword id="KW-0138">CF(0)</keyword>
<keyword id="KW-0150">Chloroplast</keyword>
<keyword id="KW-0375">Hydrogen ion transport</keyword>
<keyword id="KW-0406">Ion transport</keyword>
<keyword id="KW-0446">Lipid-binding</keyword>
<keyword id="KW-0472">Membrane</keyword>
<keyword id="KW-0934">Plastid</keyword>
<keyword id="KW-0793">Thylakoid</keyword>
<keyword id="KW-0812">Transmembrane</keyword>
<keyword id="KW-1133">Transmembrane helix</keyword>
<keyword id="KW-0813">Transport</keyword>
<evidence type="ECO:0000255" key="1">
    <source>
        <dbReference type="HAMAP-Rule" id="MF_01396"/>
    </source>
</evidence>